<evidence type="ECO:0000255" key="1">
    <source>
        <dbReference type="HAMAP-Rule" id="MF_01121"/>
    </source>
</evidence>
<evidence type="ECO:0000255" key="2">
    <source>
        <dbReference type="PROSITE-ProRule" id="PRU00236"/>
    </source>
</evidence>
<name>NPD_HELPJ</name>
<comment type="function">
    <text evidence="1">NAD-dependent lysine deacetylase and desuccinylase that specifically removes acetyl and succinyl groups on target proteins. Modulates the activities of several proteins which are inactive in their acylated form.</text>
</comment>
<comment type="catalytic activity">
    <reaction evidence="1">
        <text>N(6)-acetyl-L-lysyl-[protein] + NAD(+) + H2O = 2''-O-acetyl-ADP-D-ribose + nicotinamide + L-lysyl-[protein]</text>
        <dbReference type="Rhea" id="RHEA:43636"/>
        <dbReference type="Rhea" id="RHEA-COMP:9752"/>
        <dbReference type="Rhea" id="RHEA-COMP:10731"/>
        <dbReference type="ChEBI" id="CHEBI:15377"/>
        <dbReference type="ChEBI" id="CHEBI:17154"/>
        <dbReference type="ChEBI" id="CHEBI:29969"/>
        <dbReference type="ChEBI" id="CHEBI:57540"/>
        <dbReference type="ChEBI" id="CHEBI:61930"/>
        <dbReference type="ChEBI" id="CHEBI:83767"/>
        <dbReference type="EC" id="2.3.1.286"/>
    </reaction>
</comment>
<comment type="catalytic activity">
    <reaction evidence="1">
        <text>N(6)-succinyl-L-lysyl-[protein] + NAD(+) + H2O = 2''-O-succinyl-ADP-D-ribose + nicotinamide + L-lysyl-[protein]</text>
        <dbReference type="Rhea" id="RHEA:47668"/>
        <dbReference type="Rhea" id="RHEA-COMP:9752"/>
        <dbReference type="Rhea" id="RHEA-COMP:11877"/>
        <dbReference type="ChEBI" id="CHEBI:15377"/>
        <dbReference type="ChEBI" id="CHEBI:17154"/>
        <dbReference type="ChEBI" id="CHEBI:29969"/>
        <dbReference type="ChEBI" id="CHEBI:57540"/>
        <dbReference type="ChEBI" id="CHEBI:87830"/>
        <dbReference type="ChEBI" id="CHEBI:87832"/>
    </reaction>
</comment>
<comment type="subcellular location">
    <subcellularLocation>
        <location evidence="1">Cytoplasm</location>
    </subcellularLocation>
</comment>
<comment type="domain">
    <text evidence="1">2 residues (Tyr-53 and Arg-56) present in a large hydrophobic pocket are probably involved in substrate specificity. They are important for desuccinylation activity, but dispensable for deacetylation activity.</text>
</comment>
<comment type="similarity">
    <text evidence="1">Belongs to the sirtuin family. Class III subfamily.</text>
</comment>
<reference key="1">
    <citation type="journal article" date="1999" name="Nature">
        <title>Genomic sequence comparison of two unrelated isolates of the human gastric pathogen Helicobacter pylori.</title>
        <authorList>
            <person name="Alm R.A."/>
            <person name="Ling L.-S.L."/>
            <person name="Moir D.T."/>
            <person name="King B.L."/>
            <person name="Brown E.D."/>
            <person name="Doig P.C."/>
            <person name="Smith D.R."/>
            <person name="Noonan B."/>
            <person name="Guild B.C."/>
            <person name="deJonge B.L."/>
            <person name="Carmel G."/>
            <person name="Tummino P.J."/>
            <person name="Caruso A."/>
            <person name="Uria-Nickelsen M."/>
            <person name="Mills D.M."/>
            <person name="Ives C."/>
            <person name="Gibson R."/>
            <person name="Merberg D."/>
            <person name="Mills S.D."/>
            <person name="Jiang Q."/>
            <person name="Taylor D.E."/>
            <person name="Vovis G.F."/>
            <person name="Trust T.J."/>
        </authorList>
    </citation>
    <scope>NUCLEOTIDE SEQUENCE [LARGE SCALE GENOMIC DNA]</scope>
    <source>
        <strain>J99 / ATCC 700824</strain>
    </source>
</reference>
<feature type="chain" id="PRO_0000110320" description="NAD-dependent protein deacylase">
    <location>
        <begin position="1"/>
        <end position="234"/>
    </location>
</feature>
<feature type="domain" description="Deacetylase sirtuin-type" evidence="2">
    <location>
        <begin position="1"/>
        <end position="234"/>
    </location>
</feature>
<feature type="active site" description="Proton acceptor" evidence="1">
    <location>
        <position position="104"/>
    </location>
</feature>
<feature type="binding site" evidence="1">
    <location>
        <begin position="9"/>
        <end position="28"/>
    </location>
    <ligand>
        <name>NAD(+)</name>
        <dbReference type="ChEBI" id="CHEBI:57540"/>
    </ligand>
</feature>
<feature type="binding site" evidence="1">
    <location>
        <position position="53"/>
    </location>
    <ligand>
        <name>substrate</name>
    </ligand>
</feature>
<feature type="binding site" evidence="1">
    <location>
        <position position="56"/>
    </location>
    <ligand>
        <name>substrate</name>
    </ligand>
</feature>
<feature type="binding site" evidence="1">
    <location>
        <begin position="86"/>
        <end position="89"/>
    </location>
    <ligand>
        <name>NAD(+)</name>
        <dbReference type="ChEBI" id="CHEBI:57540"/>
    </ligand>
</feature>
<feature type="binding site" evidence="1">
    <location>
        <begin position="169"/>
        <end position="171"/>
    </location>
    <ligand>
        <name>NAD(+)</name>
        <dbReference type="ChEBI" id="CHEBI:57540"/>
    </ligand>
</feature>
<feature type="binding site" evidence="1">
    <location>
        <position position="217"/>
    </location>
    <ligand>
        <name>NAD(+)</name>
        <dbReference type="ChEBI" id="CHEBI:57540"/>
    </ligand>
</feature>
<sequence>MKNLVILSGAGISAESGIKTFRDAGGLWEGHDIMEVASPYGWKKNPQKVLDFYNQRRRQLFEVYPNKAHKALAELEKHYQVNIITQNVDDLHERAGSSRILHLHGELLSVRSEKDPNLVYRWEKDLNLGDLAQDKAQLRPDIVWFGEEVPLLKEAVSLVKQVHLLIIIGTSLQVYPAASLYTHANKDALIYYIDPKAKNARLPQNVQCINENAVHAMQDLMPKLIEMASQEMLK</sequence>
<organism>
    <name type="scientific">Helicobacter pylori (strain J99 / ATCC 700824)</name>
    <name type="common">Campylobacter pylori J99</name>
    <dbReference type="NCBI Taxonomy" id="85963"/>
    <lineage>
        <taxon>Bacteria</taxon>
        <taxon>Pseudomonadati</taxon>
        <taxon>Campylobacterota</taxon>
        <taxon>Epsilonproteobacteria</taxon>
        <taxon>Campylobacterales</taxon>
        <taxon>Helicobacteraceae</taxon>
        <taxon>Helicobacter</taxon>
    </lineage>
</organism>
<gene>
    <name evidence="1" type="primary">cobB</name>
    <name type="ordered locus">jhp_1180</name>
</gene>
<accession>Q9ZJW8</accession>
<proteinExistence type="inferred from homology"/>
<protein>
    <recommendedName>
        <fullName evidence="1">NAD-dependent protein deacylase</fullName>
        <ecNumber evidence="1">2.3.1.286</ecNumber>
    </recommendedName>
    <alternativeName>
        <fullName evidence="1">Regulatory protein SIR2 homolog</fullName>
    </alternativeName>
</protein>
<keyword id="KW-0963">Cytoplasm</keyword>
<keyword id="KW-0520">NAD</keyword>
<keyword id="KW-0808">Transferase</keyword>
<dbReference type="EC" id="2.3.1.286" evidence="1"/>
<dbReference type="EMBL" id="AE001439">
    <property type="protein sequence ID" value="AAD06766.1"/>
    <property type="molecule type" value="Genomic_DNA"/>
</dbReference>
<dbReference type="PIR" id="A71838">
    <property type="entry name" value="A71838"/>
</dbReference>
<dbReference type="RefSeq" id="WP_000793991.1">
    <property type="nucleotide sequence ID" value="NC_000921.1"/>
</dbReference>
<dbReference type="SMR" id="Q9ZJW8"/>
<dbReference type="KEGG" id="hpj:jhp_1180"/>
<dbReference type="PATRIC" id="fig|85963.30.peg.1392"/>
<dbReference type="eggNOG" id="COG0846">
    <property type="taxonomic scope" value="Bacteria"/>
</dbReference>
<dbReference type="Proteomes" id="UP000000804">
    <property type="component" value="Chromosome"/>
</dbReference>
<dbReference type="GO" id="GO:0005737">
    <property type="term" value="C:cytoplasm"/>
    <property type="evidence" value="ECO:0007669"/>
    <property type="project" value="UniProtKB-SubCell"/>
</dbReference>
<dbReference type="GO" id="GO:0017136">
    <property type="term" value="F:histone deacetylase activity, NAD-dependent"/>
    <property type="evidence" value="ECO:0007669"/>
    <property type="project" value="TreeGrafter"/>
</dbReference>
<dbReference type="GO" id="GO:0070403">
    <property type="term" value="F:NAD+ binding"/>
    <property type="evidence" value="ECO:0007669"/>
    <property type="project" value="UniProtKB-UniRule"/>
</dbReference>
<dbReference type="GO" id="GO:0036054">
    <property type="term" value="F:protein-malonyllysine demalonylase activity"/>
    <property type="evidence" value="ECO:0007669"/>
    <property type="project" value="InterPro"/>
</dbReference>
<dbReference type="GO" id="GO:0036055">
    <property type="term" value="F:protein-succinyllysine desuccinylase activity"/>
    <property type="evidence" value="ECO:0007669"/>
    <property type="project" value="UniProtKB-UniRule"/>
</dbReference>
<dbReference type="CDD" id="cd01412">
    <property type="entry name" value="SIRT5_Af1_CobB"/>
    <property type="match status" value="1"/>
</dbReference>
<dbReference type="Gene3D" id="3.30.1600.10">
    <property type="entry name" value="SIR2/SIRT2 'Small Domain"/>
    <property type="match status" value="1"/>
</dbReference>
<dbReference type="Gene3D" id="3.40.50.1220">
    <property type="entry name" value="TPP-binding domain"/>
    <property type="match status" value="1"/>
</dbReference>
<dbReference type="HAMAP" id="MF_01121">
    <property type="entry name" value="Sirtuin_ClassIII"/>
    <property type="match status" value="1"/>
</dbReference>
<dbReference type="InterPro" id="IPR029035">
    <property type="entry name" value="DHS-like_NAD/FAD-binding_dom"/>
</dbReference>
<dbReference type="InterPro" id="IPR050134">
    <property type="entry name" value="NAD-dep_sirtuin_deacylases"/>
</dbReference>
<dbReference type="InterPro" id="IPR003000">
    <property type="entry name" value="Sirtuin"/>
</dbReference>
<dbReference type="InterPro" id="IPR026591">
    <property type="entry name" value="Sirtuin_cat_small_dom_sf"/>
</dbReference>
<dbReference type="InterPro" id="IPR027546">
    <property type="entry name" value="Sirtuin_class_III"/>
</dbReference>
<dbReference type="InterPro" id="IPR026590">
    <property type="entry name" value="Ssirtuin_cat_dom"/>
</dbReference>
<dbReference type="PANTHER" id="PTHR11085:SF4">
    <property type="entry name" value="NAD-DEPENDENT PROTEIN DEACYLASE"/>
    <property type="match status" value="1"/>
</dbReference>
<dbReference type="PANTHER" id="PTHR11085">
    <property type="entry name" value="NAD-DEPENDENT PROTEIN DEACYLASE SIRTUIN-5, MITOCHONDRIAL-RELATED"/>
    <property type="match status" value="1"/>
</dbReference>
<dbReference type="Pfam" id="PF02146">
    <property type="entry name" value="SIR2"/>
    <property type="match status" value="1"/>
</dbReference>
<dbReference type="SUPFAM" id="SSF52467">
    <property type="entry name" value="DHS-like NAD/FAD-binding domain"/>
    <property type="match status" value="1"/>
</dbReference>
<dbReference type="PROSITE" id="PS50305">
    <property type="entry name" value="SIRTUIN"/>
    <property type="match status" value="1"/>
</dbReference>